<proteinExistence type="inferred from homology"/>
<organism>
    <name type="scientific">Lactobacillus acidophilus (strain ATCC 700396 / NCK56 / N2 / NCFM)</name>
    <dbReference type="NCBI Taxonomy" id="272621"/>
    <lineage>
        <taxon>Bacteria</taxon>
        <taxon>Bacillati</taxon>
        <taxon>Bacillota</taxon>
        <taxon>Bacilli</taxon>
        <taxon>Lactobacillales</taxon>
        <taxon>Lactobacillaceae</taxon>
        <taxon>Lactobacillus</taxon>
    </lineage>
</organism>
<name>EFP1_LACAC</name>
<protein>
    <recommendedName>
        <fullName evidence="1">Elongation factor P 1</fullName>
        <shortName evidence="1">EF-P 1</shortName>
    </recommendedName>
</protein>
<evidence type="ECO:0000255" key="1">
    <source>
        <dbReference type="HAMAP-Rule" id="MF_00141"/>
    </source>
</evidence>
<keyword id="KW-0963">Cytoplasm</keyword>
<keyword id="KW-0251">Elongation factor</keyword>
<keyword id="KW-0648">Protein biosynthesis</keyword>
<keyword id="KW-1185">Reference proteome</keyword>
<comment type="function">
    <text evidence="1">Involved in peptide bond synthesis. Stimulates efficient translation and peptide-bond synthesis on native or reconstituted 70S ribosomes in vitro. Probably functions indirectly by altering the affinity of the ribosome for aminoacyl-tRNA, thus increasing their reactivity as acceptors for peptidyl transferase.</text>
</comment>
<comment type="pathway">
    <text evidence="1">Protein biosynthesis; polypeptide chain elongation.</text>
</comment>
<comment type="subcellular location">
    <subcellularLocation>
        <location evidence="1">Cytoplasm</location>
    </subcellularLocation>
</comment>
<comment type="similarity">
    <text evidence="1">Belongs to the elongation factor P family.</text>
</comment>
<accession>Q5FIJ4</accession>
<feature type="chain" id="PRO_0000094263" description="Elongation factor P 1">
    <location>
        <begin position="1"/>
        <end position="191"/>
    </location>
</feature>
<reference key="1">
    <citation type="journal article" date="2005" name="Proc. Natl. Acad. Sci. U.S.A.">
        <title>Complete genome sequence of the probiotic lactic acid bacterium Lactobacillus acidophilus NCFM.</title>
        <authorList>
            <person name="Altermann E."/>
            <person name="Russell W.M."/>
            <person name="Azcarate-Peril M.A."/>
            <person name="Barrangou R."/>
            <person name="Buck B.L."/>
            <person name="McAuliffe O."/>
            <person name="Souther N."/>
            <person name="Dobson A."/>
            <person name="Duong T."/>
            <person name="Callanan M."/>
            <person name="Lick S."/>
            <person name="Hamrick A."/>
            <person name="Cano R."/>
            <person name="Klaenhammer T.R."/>
        </authorList>
    </citation>
    <scope>NUCLEOTIDE SEQUENCE [LARGE SCALE GENOMIC DNA]</scope>
    <source>
        <strain>ATCC 700396 / NCK56 / N2 / NCFM</strain>
    </source>
</reference>
<dbReference type="EMBL" id="CP000033">
    <property type="protein sequence ID" value="AAV43480.1"/>
    <property type="molecule type" value="Genomic_DNA"/>
</dbReference>
<dbReference type="RefSeq" id="YP_194511.1">
    <property type="nucleotide sequence ID" value="NC_006814.3"/>
</dbReference>
<dbReference type="SMR" id="Q5FIJ4"/>
<dbReference type="STRING" id="272621.LBA1668"/>
<dbReference type="KEGG" id="lac:LBA1668"/>
<dbReference type="PATRIC" id="fig|272621.13.peg.1588"/>
<dbReference type="eggNOG" id="COG0231">
    <property type="taxonomic scope" value="Bacteria"/>
</dbReference>
<dbReference type="HOGENOM" id="CLU_074944_3_0_9"/>
<dbReference type="OrthoDB" id="9801844at2"/>
<dbReference type="BioCyc" id="LACI272621:G1G49-1636-MONOMER"/>
<dbReference type="UniPathway" id="UPA00345"/>
<dbReference type="Proteomes" id="UP000006381">
    <property type="component" value="Chromosome"/>
</dbReference>
<dbReference type="GO" id="GO:0005737">
    <property type="term" value="C:cytoplasm"/>
    <property type="evidence" value="ECO:0007669"/>
    <property type="project" value="UniProtKB-SubCell"/>
</dbReference>
<dbReference type="GO" id="GO:0003746">
    <property type="term" value="F:translation elongation factor activity"/>
    <property type="evidence" value="ECO:0007669"/>
    <property type="project" value="UniProtKB-UniRule"/>
</dbReference>
<dbReference type="GO" id="GO:0043043">
    <property type="term" value="P:peptide biosynthetic process"/>
    <property type="evidence" value="ECO:0007669"/>
    <property type="project" value="InterPro"/>
</dbReference>
<dbReference type="CDD" id="cd04470">
    <property type="entry name" value="S1_EF-P_repeat_1"/>
    <property type="match status" value="1"/>
</dbReference>
<dbReference type="CDD" id="cd05794">
    <property type="entry name" value="S1_EF-P_repeat_2"/>
    <property type="match status" value="1"/>
</dbReference>
<dbReference type="FunFam" id="2.30.30.30:FF:000003">
    <property type="entry name" value="Elongation factor P"/>
    <property type="match status" value="1"/>
</dbReference>
<dbReference type="FunFam" id="2.40.50.140:FF:000004">
    <property type="entry name" value="Elongation factor P"/>
    <property type="match status" value="1"/>
</dbReference>
<dbReference type="FunFam" id="2.40.50.140:FF:000009">
    <property type="entry name" value="Elongation factor P"/>
    <property type="match status" value="1"/>
</dbReference>
<dbReference type="Gene3D" id="2.30.30.30">
    <property type="match status" value="1"/>
</dbReference>
<dbReference type="Gene3D" id="2.40.50.140">
    <property type="entry name" value="Nucleic acid-binding proteins"/>
    <property type="match status" value="2"/>
</dbReference>
<dbReference type="HAMAP" id="MF_00141">
    <property type="entry name" value="EF_P"/>
    <property type="match status" value="1"/>
</dbReference>
<dbReference type="InterPro" id="IPR015365">
    <property type="entry name" value="Elong-fact-P_C"/>
</dbReference>
<dbReference type="InterPro" id="IPR012340">
    <property type="entry name" value="NA-bd_OB-fold"/>
</dbReference>
<dbReference type="InterPro" id="IPR014722">
    <property type="entry name" value="Rib_uL2_dom2"/>
</dbReference>
<dbReference type="InterPro" id="IPR020599">
    <property type="entry name" value="Transl_elong_fac_P/YeiP"/>
</dbReference>
<dbReference type="InterPro" id="IPR013185">
    <property type="entry name" value="Transl_elong_KOW-like"/>
</dbReference>
<dbReference type="InterPro" id="IPR001059">
    <property type="entry name" value="Transl_elong_P/YeiP_cen"/>
</dbReference>
<dbReference type="InterPro" id="IPR013852">
    <property type="entry name" value="Transl_elong_P/YeiP_CS"/>
</dbReference>
<dbReference type="InterPro" id="IPR011768">
    <property type="entry name" value="Transl_elongation_fac_P"/>
</dbReference>
<dbReference type="InterPro" id="IPR008991">
    <property type="entry name" value="Translation_prot_SH3-like_sf"/>
</dbReference>
<dbReference type="NCBIfam" id="TIGR00038">
    <property type="entry name" value="efp"/>
    <property type="match status" value="1"/>
</dbReference>
<dbReference type="NCBIfam" id="NF001810">
    <property type="entry name" value="PRK00529.1"/>
    <property type="match status" value="1"/>
</dbReference>
<dbReference type="PANTHER" id="PTHR30053">
    <property type="entry name" value="ELONGATION FACTOR P"/>
    <property type="match status" value="1"/>
</dbReference>
<dbReference type="PANTHER" id="PTHR30053:SF12">
    <property type="entry name" value="ELONGATION FACTOR P (EF-P) FAMILY PROTEIN"/>
    <property type="match status" value="1"/>
</dbReference>
<dbReference type="Pfam" id="PF01132">
    <property type="entry name" value="EFP"/>
    <property type="match status" value="1"/>
</dbReference>
<dbReference type="Pfam" id="PF08207">
    <property type="entry name" value="EFP_N"/>
    <property type="match status" value="1"/>
</dbReference>
<dbReference type="Pfam" id="PF09285">
    <property type="entry name" value="Elong-fact-P_C"/>
    <property type="match status" value="1"/>
</dbReference>
<dbReference type="PIRSF" id="PIRSF005901">
    <property type="entry name" value="EF-P"/>
    <property type="match status" value="1"/>
</dbReference>
<dbReference type="SMART" id="SM01185">
    <property type="entry name" value="EFP"/>
    <property type="match status" value="1"/>
</dbReference>
<dbReference type="SMART" id="SM00841">
    <property type="entry name" value="Elong-fact-P_C"/>
    <property type="match status" value="1"/>
</dbReference>
<dbReference type="SUPFAM" id="SSF50249">
    <property type="entry name" value="Nucleic acid-binding proteins"/>
    <property type="match status" value="2"/>
</dbReference>
<dbReference type="SUPFAM" id="SSF50104">
    <property type="entry name" value="Translation proteins SH3-like domain"/>
    <property type="match status" value="1"/>
</dbReference>
<dbReference type="PROSITE" id="PS01275">
    <property type="entry name" value="EFP"/>
    <property type="match status" value="1"/>
</dbReference>
<gene>
    <name evidence="1" type="primary">efp1</name>
    <name type="ordered locus">LBA1668</name>
</gene>
<sequence length="191" mass="21073">MVQAINLKKGMIFSQDGKLIKVLKANHHKPGKGNTVMQMDLRDVKSGAVVHKTMRPTEKVDLVEVTKKSAQYLYNEGDNYTFMDTDTYDQYEVSADQLGDDIKFLMPNIVVDMDFTDDNKIIGIELPSTVEMTVKETQPGIKGATVAGGGKPATMETGLVVQVPDFINEGEKLVIGTENGDYKSRANSQPR</sequence>